<organism>
    <name type="scientific">Pectobacterium carotovorum subsp. carotovorum (strain PC1)</name>
    <dbReference type="NCBI Taxonomy" id="561230"/>
    <lineage>
        <taxon>Bacteria</taxon>
        <taxon>Pseudomonadati</taxon>
        <taxon>Pseudomonadota</taxon>
        <taxon>Gammaproteobacteria</taxon>
        <taxon>Enterobacterales</taxon>
        <taxon>Pectobacteriaceae</taxon>
        <taxon>Pectobacterium</taxon>
    </lineage>
</organism>
<reference key="1">
    <citation type="submission" date="2009-07" db="EMBL/GenBank/DDBJ databases">
        <title>Complete sequence of Pectobacterium carotovorum subsp. carotovorum PC1.</title>
        <authorList>
            <consortium name="US DOE Joint Genome Institute"/>
            <person name="Lucas S."/>
            <person name="Copeland A."/>
            <person name="Lapidus A."/>
            <person name="Glavina del Rio T."/>
            <person name="Tice H."/>
            <person name="Bruce D."/>
            <person name="Goodwin L."/>
            <person name="Pitluck S."/>
            <person name="Munk A.C."/>
            <person name="Brettin T."/>
            <person name="Detter J.C."/>
            <person name="Han C."/>
            <person name="Tapia R."/>
            <person name="Larimer F."/>
            <person name="Land M."/>
            <person name="Hauser L."/>
            <person name="Kyrpides N."/>
            <person name="Mikhailova N."/>
            <person name="Balakrishnan V."/>
            <person name="Glasner J."/>
            <person name="Perna N.T."/>
        </authorList>
    </citation>
    <scope>NUCLEOTIDE SEQUENCE [LARGE SCALE GENOMIC DNA]</scope>
    <source>
        <strain>PC1</strain>
    </source>
</reference>
<sequence length="152" mass="17599">MFRGATLVNLDSKGRLAVPTRYREMLNGESQGQMVCTIDLHQPCLLLYPLPEWEIIEQKLSRLSSMNPAERRVQRLLLGHASECQMDSAGRLLIANTLRQHADLKKEVMLVGQFNKFELWDEQTWYQQVRDDIDAEQSTQEPLSDRLQDLSL</sequence>
<comment type="function">
    <text evidence="1">Negatively regulates its own expression and that of the subsequent genes in the proximal part of the division and cell wall (dcw) gene cluster. Acts by binding directly to DNA. May also regulate the expression of genes outside the dcw cluster.</text>
</comment>
<comment type="subunit">
    <text evidence="1">Forms oligomers.</text>
</comment>
<comment type="subcellular location">
    <subcellularLocation>
        <location evidence="1">Cytoplasm</location>
        <location evidence="1">Nucleoid</location>
    </subcellularLocation>
</comment>
<comment type="similarity">
    <text evidence="1">Belongs to the MraZ family.</text>
</comment>
<protein>
    <recommendedName>
        <fullName>Transcriptional regulator MraZ</fullName>
    </recommendedName>
</protein>
<dbReference type="EMBL" id="CP001657">
    <property type="protein sequence ID" value="ACT14616.1"/>
    <property type="molecule type" value="Genomic_DNA"/>
</dbReference>
<dbReference type="RefSeq" id="WP_015841733.1">
    <property type="nucleotide sequence ID" value="NC_012917.1"/>
</dbReference>
<dbReference type="SMR" id="C6DEV2"/>
<dbReference type="STRING" id="561230.PC1_3601"/>
<dbReference type="GeneID" id="67792592"/>
<dbReference type="KEGG" id="pct:PC1_3601"/>
<dbReference type="eggNOG" id="COG2001">
    <property type="taxonomic scope" value="Bacteria"/>
</dbReference>
<dbReference type="HOGENOM" id="CLU_107907_2_0_6"/>
<dbReference type="OrthoDB" id="9807753at2"/>
<dbReference type="Proteomes" id="UP000002736">
    <property type="component" value="Chromosome"/>
</dbReference>
<dbReference type="GO" id="GO:0005737">
    <property type="term" value="C:cytoplasm"/>
    <property type="evidence" value="ECO:0007669"/>
    <property type="project" value="UniProtKB-UniRule"/>
</dbReference>
<dbReference type="GO" id="GO:0009295">
    <property type="term" value="C:nucleoid"/>
    <property type="evidence" value="ECO:0007669"/>
    <property type="project" value="UniProtKB-SubCell"/>
</dbReference>
<dbReference type="GO" id="GO:0003700">
    <property type="term" value="F:DNA-binding transcription factor activity"/>
    <property type="evidence" value="ECO:0007669"/>
    <property type="project" value="UniProtKB-UniRule"/>
</dbReference>
<dbReference type="GO" id="GO:0000976">
    <property type="term" value="F:transcription cis-regulatory region binding"/>
    <property type="evidence" value="ECO:0007669"/>
    <property type="project" value="TreeGrafter"/>
</dbReference>
<dbReference type="GO" id="GO:2000143">
    <property type="term" value="P:negative regulation of DNA-templated transcription initiation"/>
    <property type="evidence" value="ECO:0007669"/>
    <property type="project" value="TreeGrafter"/>
</dbReference>
<dbReference type="CDD" id="cd16321">
    <property type="entry name" value="MraZ_C"/>
    <property type="match status" value="1"/>
</dbReference>
<dbReference type="CDD" id="cd16320">
    <property type="entry name" value="MraZ_N"/>
    <property type="match status" value="1"/>
</dbReference>
<dbReference type="FunFam" id="3.40.1550.20:FF:000001">
    <property type="entry name" value="Transcriptional regulator MraZ"/>
    <property type="match status" value="1"/>
</dbReference>
<dbReference type="Gene3D" id="3.40.1550.20">
    <property type="entry name" value="Transcriptional regulator MraZ domain"/>
    <property type="match status" value="1"/>
</dbReference>
<dbReference type="HAMAP" id="MF_01008">
    <property type="entry name" value="MraZ"/>
    <property type="match status" value="1"/>
</dbReference>
<dbReference type="InterPro" id="IPR003444">
    <property type="entry name" value="MraZ"/>
</dbReference>
<dbReference type="InterPro" id="IPR035644">
    <property type="entry name" value="MraZ_C"/>
</dbReference>
<dbReference type="InterPro" id="IPR020603">
    <property type="entry name" value="MraZ_dom"/>
</dbReference>
<dbReference type="InterPro" id="IPR035642">
    <property type="entry name" value="MraZ_N"/>
</dbReference>
<dbReference type="InterPro" id="IPR038619">
    <property type="entry name" value="MraZ_sf"/>
</dbReference>
<dbReference type="InterPro" id="IPR007159">
    <property type="entry name" value="SpoVT-AbrB_dom"/>
</dbReference>
<dbReference type="InterPro" id="IPR037914">
    <property type="entry name" value="SpoVT-AbrB_sf"/>
</dbReference>
<dbReference type="NCBIfam" id="TIGR00242">
    <property type="entry name" value="division/cell wall cluster transcriptional repressor MraZ"/>
    <property type="match status" value="1"/>
</dbReference>
<dbReference type="PANTHER" id="PTHR34701">
    <property type="entry name" value="TRANSCRIPTIONAL REGULATOR MRAZ"/>
    <property type="match status" value="1"/>
</dbReference>
<dbReference type="PANTHER" id="PTHR34701:SF1">
    <property type="entry name" value="TRANSCRIPTIONAL REGULATOR MRAZ"/>
    <property type="match status" value="1"/>
</dbReference>
<dbReference type="Pfam" id="PF02381">
    <property type="entry name" value="MraZ"/>
    <property type="match status" value="2"/>
</dbReference>
<dbReference type="SUPFAM" id="SSF89447">
    <property type="entry name" value="AbrB/MazE/MraZ-like"/>
    <property type="match status" value="1"/>
</dbReference>
<dbReference type="PROSITE" id="PS51740">
    <property type="entry name" value="SPOVT_ABRB"/>
    <property type="match status" value="2"/>
</dbReference>
<feature type="chain" id="PRO_1000213180" description="Transcriptional regulator MraZ">
    <location>
        <begin position="1"/>
        <end position="152"/>
    </location>
</feature>
<feature type="domain" description="SpoVT-AbrB 1" evidence="2">
    <location>
        <begin position="5"/>
        <end position="52"/>
    </location>
</feature>
<feature type="domain" description="SpoVT-AbrB 2" evidence="2">
    <location>
        <begin position="81"/>
        <end position="124"/>
    </location>
</feature>
<name>MRAZ_PECCP</name>
<keyword id="KW-0963">Cytoplasm</keyword>
<keyword id="KW-0238">DNA-binding</keyword>
<keyword id="KW-0677">Repeat</keyword>
<keyword id="KW-0678">Repressor</keyword>
<keyword id="KW-0804">Transcription</keyword>
<keyword id="KW-0805">Transcription regulation</keyword>
<accession>C6DEV2</accession>
<evidence type="ECO:0000255" key="1">
    <source>
        <dbReference type="HAMAP-Rule" id="MF_01008"/>
    </source>
</evidence>
<evidence type="ECO:0000255" key="2">
    <source>
        <dbReference type="PROSITE-ProRule" id="PRU01076"/>
    </source>
</evidence>
<proteinExistence type="inferred from homology"/>
<gene>
    <name evidence="1" type="primary">mraZ</name>
    <name type="ordered locus">PC1_3601</name>
</gene>